<name>YCFP_ECOHS</name>
<reference key="1">
    <citation type="journal article" date="2008" name="J. Bacteriol.">
        <title>The pangenome structure of Escherichia coli: comparative genomic analysis of E. coli commensal and pathogenic isolates.</title>
        <authorList>
            <person name="Rasko D.A."/>
            <person name="Rosovitz M.J."/>
            <person name="Myers G.S.A."/>
            <person name="Mongodin E.F."/>
            <person name="Fricke W.F."/>
            <person name="Gajer P."/>
            <person name="Crabtree J."/>
            <person name="Sebaihia M."/>
            <person name="Thomson N.R."/>
            <person name="Chaudhuri R."/>
            <person name="Henderson I.R."/>
            <person name="Sperandio V."/>
            <person name="Ravel J."/>
        </authorList>
    </citation>
    <scope>NUCLEOTIDE SEQUENCE [LARGE SCALE GENOMIC DNA]</scope>
    <source>
        <strain>HS</strain>
    </source>
</reference>
<feature type="chain" id="PRO_1000064288" description="UPF0227 protein YcfP">
    <location>
        <begin position="1"/>
        <end position="180"/>
    </location>
</feature>
<organism>
    <name type="scientific">Escherichia coli O9:H4 (strain HS)</name>
    <dbReference type="NCBI Taxonomy" id="331112"/>
    <lineage>
        <taxon>Bacteria</taxon>
        <taxon>Pseudomonadati</taxon>
        <taxon>Pseudomonadota</taxon>
        <taxon>Gammaproteobacteria</taxon>
        <taxon>Enterobacterales</taxon>
        <taxon>Enterobacteriaceae</taxon>
        <taxon>Escherichia</taxon>
    </lineage>
</organism>
<gene>
    <name evidence="1" type="primary">ycfP</name>
    <name type="ordered locus">EcHS_A1231</name>
</gene>
<comment type="similarity">
    <text evidence="1">Belongs to the UPF0227 family.</text>
</comment>
<protein>
    <recommendedName>
        <fullName evidence="1">UPF0227 protein YcfP</fullName>
    </recommendedName>
</protein>
<evidence type="ECO:0000255" key="1">
    <source>
        <dbReference type="HAMAP-Rule" id="MF_01047"/>
    </source>
</evidence>
<sequence length="180" mass="21212">MIIYLHGFDSNSPGNHEKVLQLQFIDPDVRLISYSTRHPKHDMQHLLKEVDKMLQLNVDERPLICGVGLGGYWAERIGFLCDIRQVIFNPNLFPYENMEGKIDRPEEYADIATKCVTNFREKNRDRCLVILSRNDEALNSQRTSEELHHYYEIVWDEEQSHKFKNISPHLQRIKAFKTLG</sequence>
<accession>A7ZZ66</accession>
<dbReference type="EMBL" id="CP000802">
    <property type="protein sequence ID" value="ABV05570.1"/>
    <property type="molecule type" value="Genomic_DNA"/>
</dbReference>
<dbReference type="RefSeq" id="WP_000587930.1">
    <property type="nucleotide sequence ID" value="NC_009800.1"/>
</dbReference>
<dbReference type="SMR" id="A7ZZ66"/>
<dbReference type="ESTHER" id="ecoli-ycfp">
    <property type="family name" value="abh_upf00227"/>
</dbReference>
<dbReference type="KEGG" id="ecx:EcHS_A1231"/>
<dbReference type="HOGENOM" id="CLU_128769_0_0_6"/>
<dbReference type="FunFam" id="3.40.50.1820:FF:000007">
    <property type="entry name" value="UPF0227 protein YcfP"/>
    <property type="match status" value="1"/>
</dbReference>
<dbReference type="Gene3D" id="3.40.50.1820">
    <property type="entry name" value="alpha/beta hydrolase"/>
    <property type="match status" value="1"/>
</dbReference>
<dbReference type="HAMAP" id="MF_01047">
    <property type="entry name" value="UPF0227"/>
    <property type="match status" value="1"/>
</dbReference>
<dbReference type="InterPro" id="IPR029058">
    <property type="entry name" value="AB_hydrolase_fold"/>
</dbReference>
<dbReference type="InterPro" id="IPR022987">
    <property type="entry name" value="UPF0227"/>
</dbReference>
<dbReference type="InterPro" id="IPR008886">
    <property type="entry name" value="UPF0227/Esterase_YqiA"/>
</dbReference>
<dbReference type="NCBIfam" id="NF003431">
    <property type="entry name" value="PRK04940.1"/>
    <property type="match status" value="1"/>
</dbReference>
<dbReference type="PANTHER" id="PTHR35602">
    <property type="entry name" value="ESTERASE YQIA-RELATED"/>
    <property type="match status" value="1"/>
</dbReference>
<dbReference type="PANTHER" id="PTHR35602:SF2">
    <property type="entry name" value="UPF0227 PROTEIN YCFP"/>
    <property type="match status" value="1"/>
</dbReference>
<dbReference type="Pfam" id="PF05728">
    <property type="entry name" value="UPF0227"/>
    <property type="match status" value="1"/>
</dbReference>
<dbReference type="SUPFAM" id="SSF53474">
    <property type="entry name" value="alpha/beta-Hydrolases"/>
    <property type="match status" value="1"/>
</dbReference>
<proteinExistence type="inferred from homology"/>